<sequence>MRVSLRFTILAVSAMIFFPVIVFIYVVEAHTSPKVIADDQERSYGVICDAGSTGTRLFVYNWISTSDSELIQIEPVIYDNKPVMKKISPGLSTFGTKPAQAAEYLRPLMELAERHIPEEKRPYTPVFIFATAGMRLIPDEQKEAVLKNLRNKLPKITSMQVLKEHIRIIEGKWEGIYSWIAVNYALGKFNKTATLDFPGTSPAHARQKTVGMIDMGGASAQIAFELPDTDSFSSINVENINLGCREDDSLFKYKLFVTTFLGYGVNEGIRKYEHMLLSKLKDQNGTVIQDDCMPLNLHKTVTLENGENFVRRGTGNWNTCSNEVKKLLNPESSSEVCKAEAAKCYFGAVPAPSIPLSNIEMYGFSEYWYSTHDVLGLGGQYDAENIAKKTQQYCSKRWSTIQAESKKQLYPRADEERLRTQCFKSAWITSVLHDGFSVDKTHNKFQSVSTIAGQEVQWALGAMIYHMRFFPLRDSSRNLIVKETHSSSESLWAPLFFLSAVFCLFVLVCAKEQSVLCFDDKRRSSFGMSRSQYSYKMLKENRTSSSFLENFA</sequence>
<reference key="1">
    <citation type="journal article" date="2004" name="Nat. Cell Biol.">
        <title>An NDPase links ADAM protease glycosylation with organ morphogenesis in C. elegans.</title>
        <authorList>
            <person name="Nishiwaki K."/>
            <person name="Kubota Y."/>
            <person name="Chigira Y."/>
            <person name="Roy S.K."/>
            <person name="Suzuki M."/>
            <person name="Schvarzstein M."/>
            <person name="Jigami Y."/>
            <person name="Hisamoto N."/>
            <person name="Matsumoto K."/>
        </authorList>
    </citation>
    <scope>NUCLEOTIDE SEQUENCE [MRNA]</scope>
    <scope>FUNCTION</scope>
    <scope>SUBCELLULAR LOCATION</scope>
    <scope>TISSUE SPECIFICITY</scope>
    <scope>MUTAGENESIS OF GLY-268 AND ASP-290</scope>
</reference>
<reference key="2">
    <citation type="journal article" date="1998" name="Science">
        <title>Genome sequence of the nematode C. elegans: a platform for investigating biology.</title>
        <authorList>
            <consortium name="The C. elegans sequencing consortium"/>
        </authorList>
    </citation>
    <scope>NUCLEOTIDE SEQUENCE [LARGE SCALE GENOMIC DNA]</scope>
    <source>
        <strain>Bristol N2</strain>
    </source>
</reference>
<reference key="3">
    <citation type="journal article" date="2004" name="J. Biol. Chem.">
        <title>ire-1-dependent transcriptional up-regulation of a lumenal uridine diphosphatase from Caenorhabditis elegans.</title>
        <authorList>
            <person name="Uccelletti D."/>
            <person name="O'Callaghan C."/>
            <person name="Berninsone P."/>
            <person name="Zemtseva I."/>
            <person name="Abeijon C."/>
            <person name="Hirschberg C.B."/>
        </authorList>
    </citation>
    <scope>LACK OF INDUCTION BY STRESS</scope>
</reference>
<reference key="4">
    <citation type="journal article" date="2006" name="Development">
        <title>The conserved oligomeric Golgi complex acts in organ morphogenesis via glycosylation of an ADAM protease in C. elegans.</title>
        <authorList>
            <person name="Kubota Y."/>
            <person name="Sano M."/>
            <person name="Goda S."/>
            <person name="Suzuki N."/>
            <person name="Nishiwaki K."/>
        </authorList>
    </citation>
    <scope>SUBCELLULAR LOCATION</scope>
</reference>
<evidence type="ECO:0000250" key="1"/>
<evidence type="ECO:0000255" key="2"/>
<evidence type="ECO:0000269" key="3">
    <source>
    </source>
</evidence>
<evidence type="ECO:0000269" key="4">
    <source>
    </source>
</evidence>
<evidence type="ECO:0000305" key="5"/>
<comment type="function">
    <text evidence="3">Seems to be able to hydrolyze ADP, UDP and GDP. Supports mig-17 glycosylation and surface expression, which is required for proper migration of distal tip cells during gonad morphogenesis.</text>
</comment>
<comment type="catalytic activity">
    <reaction>
        <text>a ribonucleoside 5'-diphosphate + H2O = a ribonucleoside 5'-phosphate + phosphate + H(+)</text>
        <dbReference type="Rhea" id="RHEA:36799"/>
        <dbReference type="ChEBI" id="CHEBI:15377"/>
        <dbReference type="ChEBI" id="CHEBI:15378"/>
        <dbReference type="ChEBI" id="CHEBI:43474"/>
        <dbReference type="ChEBI" id="CHEBI:57930"/>
        <dbReference type="ChEBI" id="CHEBI:58043"/>
        <dbReference type="EC" id="3.6.1.6"/>
    </reaction>
</comment>
<comment type="subcellular location">
    <subcellularLocation>
        <location evidence="3 4">Golgi apparatus membrane</location>
        <topology evidence="3 4">Multi-pass membrane protein</topology>
    </subcellularLocation>
</comment>
<comment type="tissue specificity">
    <text evidence="3">Expressed in body wall muscles.</text>
</comment>
<comment type="induction">
    <text>In contrast to uda-1, expression is not induced by stress.</text>
</comment>
<comment type="similarity">
    <text evidence="5">Belongs to the GDA1/CD39 NTPase family.</text>
</comment>
<protein>
    <recommendedName>
        <fullName>Nucleoside-diphosphatase mig-23</fullName>
        <shortName>NDPase</shortName>
        <ecNumber>3.6.1.6</ecNumber>
    </recommendedName>
    <alternativeName>
        <fullName>Abnormal cell migration protein 23</fullName>
    </alternativeName>
</protein>
<gene>
    <name type="primary">mig-23</name>
    <name type="ORF">R07E4.4</name>
</gene>
<organism>
    <name type="scientific">Caenorhabditis elegans</name>
    <dbReference type="NCBI Taxonomy" id="6239"/>
    <lineage>
        <taxon>Eukaryota</taxon>
        <taxon>Metazoa</taxon>
        <taxon>Ecdysozoa</taxon>
        <taxon>Nematoda</taxon>
        <taxon>Chromadorea</taxon>
        <taxon>Rhabditida</taxon>
        <taxon>Rhabditina</taxon>
        <taxon>Rhabditomorpha</taxon>
        <taxon>Rhabditoidea</taxon>
        <taxon>Rhabditidae</taxon>
        <taxon>Peloderinae</taxon>
        <taxon>Caenorhabditis</taxon>
    </lineage>
</organism>
<feature type="chain" id="PRO_0000209923" description="Nucleoside-diphosphatase mig-23">
    <location>
        <begin position="1"/>
        <end position="552"/>
    </location>
</feature>
<feature type="topological domain" description="Cytoplasmic" evidence="2">
    <location>
        <begin position="1"/>
        <end position="6"/>
    </location>
</feature>
<feature type="transmembrane region" description="Helical" evidence="2">
    <location>
        <begin position="7"/>
        <end position="27"/>
    </location>
</feature>
<feature type="topological domain" description="Lumenal" evidence="2">
    <location>
        <begin position="28"/>
        <end position="489"/>
    </location>
</feature>
<feature type="transmembrane region" description="Helical" evidence="2">
    <location>
        <begin position="490"/>
        <end position="510"/>
    </location>
</feature>
<feature type="topological domain" description="Cytoplasmic" evidence="2">
    <location>
        <begin position="511"/>
        <end position="552"/>
    </location>
</feature>
<feature type="active site" description="Proton acceptor" evidence="1">
    <location>
        <position position="174"/>
    </location>
</feature>
<feature type="glycosylation site" description="N-linked (GlcNAc...) asparagine" evidence="2">
    <location>
        <position position="190"/>
    </location>
</feature>
<feature type="glycosylation site" description="N-linked (GlcNAc...) asparagine" evidence="2">
    <location>
        <position position="284"/>
    </location>
</feature>
<feature type="mutagenesis site" description="In k166; reduced migration of the gonad arms in both the anterior and posterior direction." evidence="3">
    <original>G</original>
    <variation>E</variation>
    <location>
        <position position="268"/>
    </location>
</feature>
<feature type="mutagenesis site" description="In k146; reduced migration of the gonad arms in both the anterior and posterior direction." evidence="3">
    <original>D</original>
    <variation>N</variation>
    <location>
        <position position="290"/>
    </location>
</feature>
<proteinExistence type="evidence at protein level"/>
<keyword id="KW-0217">Developmental protein</keyword>
<keyword id="KW-0221">Differentiation</keyword>
<keyword id="KW-0325">Glycoprotein</keyword>
<keyword id="KW-0333">Golgi apparatus</keyword>
<keyword id="KW-0334">Gonadal differentiation</keyword>
<keyword id="KW-0378">Hydrolase</keyword>
<keyword id="KW-0472">Membrane</keyword>
<keyword id="KW-1185">Reference proteome</keyword>
<keyword id="KW-0812">Transmembrane</keyword>
<keyword id="KW-1133">Transmembrane helix</keyword>
<name>MIG23_CAEEL</name>
<dbReference type="EC" id="3.6.1.6"/>
<dbReference type="EMBL" id="AB126261">
    <property type="protein sequence ID" value="BAD02168.1"/>
    <property type="molecule type" value="mRNA"/>
</dbReference>
<dbReference type="EMBL" id="FO080885">
    <property type="protein sequence ID" value="CCD67510.1"/>
    <property type="molecule type" value="Genomic_DNA"/>
</dbReference>
<dbReference type="PIR" id="T16696">
    <property type="entry name" value="T16696"/>
</dbReference>
<dbReference type="RefSeq" id="NP_508994.1">
    <property type="nucleotide sequence ID" value="NM_076593.8"/>
</dbReference>
<dbReference type="SMR" id="Q21815"/>
<dbReference type="FunCoup" id="Q21815">
    <property type="interactions" value="1880"/>
</dbReference>
<dbReference type="STRING" id="6239.R07E4.4.1"/>
<dbReference type="GlyCosmos" id="Q21815">
    <property type="glycosylation" value="2 sites, No reported glycans"/>
</dbReference>
<dbReference type="iPTMnet" id="Q21815"/>
<dbReference type="PaxDb" id="6239-R07E4.4"/>
<dbReference type="PeptideAtlas" id="Q21815"/>
<dbReference type="EnsemblMetazoa" id="R07E4.4.1">
    <property type="protein sequence ID" value="R07E4.4.1"/>
    <property type="gene ID" value="WBGene00003254"/>
</dbReference>
<dbReference type="GeneID" id="180860"/>
<dbReference type="KEGG" id="cel:CELE_R07E4.4"/>
<dbReference type="UCSC" id="R07E4.4">
    <property type="organism name" value="c. elegans"/>
</dbReference>
<dbReference type="AGR" id="WB:WBGene00003254"/>
<dbReference type="CTD" id="180860"/>
<dbReference type="WormBase" id="R07E4.4">
    <property type="protein sequence ID" value="CE28748"/>
    <property type="gene ID" value="WBGene00003254"/>
    <property type="gene designation" value="mig-23"/>
</dbReference>
<dbReference type="eggNOG" id="KOG1386">
    <property type="taxonomic scope" value="Eukaryota"/>
</dbReference>
<dbReference type="GeneTree" id="ENSGT01110000267240"/>
<dbReference type="HOGENOM" id="CLU_010246_6_1_1"/>
<dbReference type="InParanoid" id="Q21815"/>
<dbReference type="OMA" id="ENPFHRH"/>
<dbReference type="OrthoDB" id="6372431at2759"/>
<dbReference type="PhylomeDB" id="Q21815"/>
<dbReference type="Reactome" id="R-CEL-8850843">
    <property type="pathway name" value="Phosphate bond hydrolysis by NTPDase proteins"/>
</dbReference>
<dbReference type="PRO" id="PR:Q21815"/>
<dbReference type="Proteomes" id="UP000001940">
    <property type="component" value="Chromosome X"/>
</dbReference>
<dbReference type="Bgee" id="WBGene00003254">
    <property type="expression patterns" value="Expressed in germ line (C elegans) and 4 other cell types or tissues"/>
</dbReference>
<dbReference type="GO" id="GO:0005737">
    <property type="term" value="C:cytoplasm"/>
    <property type="evidence" value="ECO:0000314"/>
    <property type="project" value="WormBase"/>
</dbReference>
<dbReference type="GO" id="GO:0005794">
    <property type="term" value="C:Golgi apparatus"/>
    <property type="evidence" value="ECO:0000318"/>
    <property type="project" value="GO_Central"/>
</dbReference>
<dbReference type="GO" id="GO:0000139">
    <property type="term" value="C:Golgi membrane"/>
    <property type="evidence" value="ECO:0000250"/>
    <property type="project" value="WormBase"/>
</dbReference>
<dbReference type="GO" id="GO:0016020">
    <property type="term" value="C:membrane"/>
    <property type="evidence" value="ECO:0000318"/>
    <property type="project" value="GO_Central"/>
</dbReference>
<dbReference type="GO" id="GO:0043262">
    <property type="term" value="F:ADP phosphatase activity"/>
    <property type="evidence" value="ECO:0000315"/>
    <property type="project" value="WormBase"/>
</dbReference>
<dbReference type="GO" id="GO:0004382">
    <property type="term" value="F:GDP phosphatase activity"/>
    <property type="evidence" value="ECO:0000315"/>
    <property type="project" value="WormBase"/>
</dbReference>
<dbReference type="GO" id="GO:0017111">
    <property type="term" value="F:ribonucleoside triphosphate phosphatase activity"/>
    <property type="evidence" value="ECO:0000318"/>
    <property type="project" value="GO_Central"/>
</dbReference>
<dbReference type="GO" id="GO:0045134">
    <property type="term" value="F:UDP phosphatase activity"/>
    <property type="evidence" value="ECO:0000315"/>
    <property type="project" value="WormBase"/>
</dbReference>
<dbReference type="GO" id="GO:0046032">
    <property type="term" value="P:ADP catabolic process"/>
    <property type="evidence" value="ECO:0000315"/>
    <property type="project" value="WormBase"/>
</dbReference>
<dbReference type="GO" id="GO:0030154">
    <property type="term" value="P:cell differentiation"/>
    <property type="evidence" value="ECO:0007669"/>
    <property type="project" value="UniProtKB-KW"/>
</dbReference>
<dbReference type="GO" id="GO:0046036">
    <property type="term" value="P:CTP metabolic process"/>
    <property type="evidence" value="ECO:0000318"/>
    <property type="project" value="GO_Central"/>
</dbReference>
<dbReference type="GO" id="GO:0046712">
    <property type="term" value="P:GDP catabolic process"/>
    <property type="evidence" value="ECO:0000315"/>
    <property type="project" value="WormBase"/>
</dbReference>
<dbReference type="GO" id="GO:0035262">
    <property type="term" value="P:gonad morphogenesis"/>
    <property type="evidence" value="ECO:0000315"/>
    <property type="project" value="WormBase"/>
</dbReference>
<dbReference type="GO" id="GO:0007506">
    <property type="term" value="P:gonadal mesoderm development"/>
    <property type="evidence" value="ECO:0007669"/>
    <property type="project" value="UniProtKB-KW"/>
</dbReference>
<dbReference type="GO" id="GO:0060050">
    <property type="term" value="P:positive regulation of protein glycosylation"/>
    <property type="evidence" value="ECO:0000315"/>
    <property type="project" value="WormBase"/>
</dbReference>
<dbReference type="GO" id="GO:0030334">
    <property type="term" value="P:regulation of cell migration"/>
    <property type="evidence" value="ECO:0000315"/>
    <property type="project" value="WormBase"/>
</dbReference>
<dbReference type="GO" id="GO:0006256">
    <property type="term" value="P:UDP catabolic process"/>
    <property type="evidence" value="ECO:0000315"/>
    <property type="project" value="WormBase"/>
</dbReference>
<dbReference type="CDD" id="cd24045">
    <property type="entry name" value="ASKHA_NBD_NTPDase4-like"/>
    <property type="match status" value="1"/>
</dbReference>
<dbReference type="FunFam" id="3.30.420.40:FF:000057">
    <property type="entry name" value="Ectonucleoside triphosphate diphosphohydrolase 4"/>
    <property type="match status" value="1"/>
</dbReference>
<dbReference type="FunFam" id="3.30.420.150:FF:000003">
    <property type="entry name" value="ectonucleoside triphosphate diphosphohydrolase 7"/>
    <property type="match status" value="1"/>
</dbReference>
<dbReference type="Gene3D" id="3.30.420.40">
    <property type="match status" value="1"/>
</dbReference>
<dbReference type="Gene3D" id="3.30.420.150">
    <property type="entry name" value="Exopolyphosphatase. Domain 2"/>
    <property type="match status" value="1"/>
</dbReference>
<dbReference type="InterPro" id="IPR000407">
    <property type="entry name" value="GDA1_CD39_NTPase"/>
</dbReference>
<dbReference type="PANTHER" id="PTHR11782">
    <property type="entry name" value="ADENOSINE/GUANOSINE DIPHOSPHATASE"/>
    <property type="match status" value="1"/>
</dbReference>
<dbReference type="PANTHER" id="PTHR11782:SF121">
    <property type="entry name" value="NUCLEOSIDE-DIPHOSPHATASE MIG-23"/>
    <property type="match status" value="1"/>
</dbReference>
<dbReference type="Pfam" id="PF01150">
    <property type="entry name" value="GDA1_CD39"/>
    <property type="match status" value="1"/>
</dbReference>
<dbReference type="PROSITE" id="PS01238">
    <property type="entry name" value="GDA1_CD39_NTPASE"/>
    <property type="match status" value="1"/>
</dbReference>
<accession>Q21815</accession>